<evidence type="ECO:0000250" key="1"/>
<evidence type="ECO:0000255" key="2"/>
<evidence type="ECO:0000255" key="3">
    <source>
        <dbReference type="PROSITE-ProRule" id="PRU00121"/>
    </source>
</evidence>
<evidence type="ECO:0000255" key="4">
    <source>
        <dbReference type="PROSITE-ProRule" id="PRU00196"/>
    </source>
</evidence>
<evidence type="ECO:0000255" key="5">
    <source>
        <dbReference type="PROSITE-ProRule" id="PRU00274"/>
    </source>
</evidence>
<evidence type="ECO:0000256" key="6">
    <source>
        <dbReference type="SAM" id="MobiDB-lite"/>
    </source>
</evidence>
<comment type="function">
    <text evidence="1">Plays a role in neuronal plasticity and the proteolytic action may subserve structural reorganizations associated with learning and memory operations.</text>
</comment>
<comment type="subcellular location">
    <subcellularLocation>
        <location>Secreted</location>
    </subcellularLocation>
</comment>
<comment type="similarity">
    <text evidence="5">Belongs to the peptidase S1 family.</text>
</comment>
<feature type="signal peptide" evidence="2">
    <location>
        <begin position="1"/>
        <end position="20"/>
    </location>
</feature>
<feature type="chain" id="PRO_0000027662" description="Neurotrypsin">
    <location>
        <begin position="21"/>
        <end position="876"/>
    </location>
</feature>
<feature type="domain" description="Kringle" evidence="3">
    <location>
        <begin position="94"/>
        <end position="166"/>
    </location>
</feature>
<feature type="domain" description="SRCR 1" evidence="4">
    <location>
        <begin position="171"/>
        <end position="272"/>
    </location>
</feature>
<feature type="domain" description="SRCR 2" evidence="4">
    <location>
        <begin position="281"/>
        <end position="382"/>
    </location>
</feature>
<feature type="domain" description="SRCR 3" evidence="4">
    <location>
        <begin position="388"/>
        <end position="488"/>
    </location>
</feature>
<feature type="domain" description="SRCR 4" evidence="4">
    <location>
        <begin position="501"/>
        <end position="602"/>
    </location>
</feature>
<feature type="domain" description="Peptidase S1" evidence="5">
    <location>
        <begin position="632"/>
        <end position="875"/>
    </location>
</feature>
<feature type="region of interest" description="Disordered" evidence="6">
    <location>
        <begin position="29"/>
        <end position="89"/>
    </location>
</feature>
<feature type="region of interest" description="Zymogen activation region">
    <location>
        <begin position="620"/>
        <end position="631"/>
    </location>
</feature>
<feature type="compositionally biased region" description="Low complexity" evidence="6">
    <location>
        <begin position="43"/>
        <end position="54"/>
    </location>
</feature>
<feature type="compositionally biased region" description="Pro residues" evidence="6">
    <location>
        <begin position="57"/>
        <end position="72"/>
    </location>
</feature>
<feature type="active site" description="Charge relay system" evidence="1">
    <location>
        <position position="677"/>
    </location>
</feature>
<feature type="active site" description="Charge relay system" evidence="1">
    <location>
        <position position="727"/>
    </location>
</feature>
<feature type="active site" description="Charge relay system" evidence="1">
    <location>
        <position position="826"/>
    </location>
</feature>
<feature type="site" description="Reactive bond homolog" evidence="2">
    <location>
        <begin position="631"/>
        <end position="632"/>
    </location>
</feature>
<feature type="glycosylation site" description="N-linked (GlcNAc...) asparagine" evidence="2">
    <location>
        <position position="26"/>
    </location>
</feature>
<feature type="glycosylation site" description="N-linked (GlcNAc...) asparagine" evidence="2">
    <location>
        <position position="684"/>
    </location>
</feature>
<feature type="disulfide bond" evidence="1">
    <location>
        <begin position="94"/>
        <end position="166"/>
    </location>
</feature>
<feature type="disulfide bond" evidence="1">
    <location>
        <begin position="110"/>
        <end position="150"/>
    </location>
</feature>
<feature type="disulfide bond" evidence="1">
    <location>
        <begin position="139"/>
        <end position="164"/>
    </location>
</feature>
<feature type="disulfide bond" evidence="1">
    <location>
        <begin position="196"/>
        <end position="260"/>
    </location>
</feature>
<feature type="disulfide bond" evidence="1">
    <location>
        <begin position="209"/>
        <end position="270"/>
    </location>
</feature>
<feature type="disulfide bond" evidence="1">
    <location>
        <begin position="240"/>
        <end position="250"/>
    </location>
</feature>
<feature type="disulfide bond" evidence="1">
    <location>
        <begin position="306"/>
        <end position="370"/>
    </location>
</feature>
<feature type="disulfide bond" evidence="1">
    <location>
        <begin position="319"/>
        <end position="380"/>
    </location>
</feature>
<feature type="disulfide bond" evidence="1">
    <location>
        <begin position="350"/>
        <end position="360"/>
    </location>
</feature>
<feature type="disulfide bond" evidence="1">
    <location>
        <begin position="413"/>
        <end position="476"/>
    </location>
</feature>
<feature type="disulfide bond" evidence="1">
    <location>
        <begin position="426"/>
        <end position="486"/>
    </location>
</feature>
<feature type="disulfide bond" evidence="1">
    <location>
        <begin position="456"/>
        <end position="466"/>
    </location>
</feature>
<feature type="disulfide bond" evidence="1">
    <location>
        <begin position="526"/>
        <end position="590"/>
    </location>
</feature>
<feature type="disulfide bond" evidence="1">
    <location>
        <begin position="539"/>
        <end position="600"/>
    </location>
</feature>
<feature type="disulfide bond" evidence="1">
    <location>
        <begin position="570"/>
        <end position="580"/>
    </location>
</feature>
<feature type="disulfide bond" evidence="2">
    <location>
        <begin position="620"/>
        <end position="751"/>
    </location>
</feature>
<feature type="disulfide bond" evidence="1">
    <location>
        <begin position="662"/>
        <end position="678"/>
    </location>
</feature>
<feature type="disulfide bond" evidence="1">
    <location>
        <begin position="766"/>
        <end position="832"/>
    </location>
</feature>
<feature type="disulfide bond" evidence="1">
    <location>
        <begin position="795"/>
        <end position="809"/>
    </location>
</feature>
<feature type="disulfide bond" evidence="1">
    <location>
        <begin position="822"/>
        <end position="851"/>
    </location>
</feature>
<sequence>MTLARFVLALMLGALPEVVGFDSVLNDSLHHSHRHSPPPGPHYPSYYLPTQQRPPRTRPPPPLPRFPRPPRALPAQRPHALQAGHTPRPHPWGCPAGEPWVSVTDFGARCLRWAEVPPFLERSPPASWAQLRGQRHNFCRSPDGAGRPWCFYGDARGKVDWGYCDCRHGSVRLRGGKNEFEGTVEVYASGVWGTVCSSHWDDSDASVICHQLQLGGKGIAKQTPFSGLGLIPVYWSNVRCRGDEENILLCEKDIWQGGVCPQKMAAAVTCSFSHGPTFPIIRLAGGSSVHEGRVELYHAGQWGTVCDDQWDDADAEVICRQLGLSGIAKAWHQAYFGEGSGPVMLDEVRCTGNELSIEQCPKSSWGEHNCGHKEDAGVSCTPLTDGVIRLAGGKGSHEGRLEVYYRGQWGTVCDDGWTELNTYVVCRQLGFKYGKQASANHFEESTGPIWLDDVSCSGKETRFLQCSRRQWGRHDCSHREDVSIACYPGGEGHRLSLGFPVRLMDGENKKEGRVEVFINGQWGTICDDGWTDKDAAVICRQLGYKGPARARTMAYFGEGKGPIHVDNVKCTGNERSLADCIKQDIGRHNCRHSEDAGVICDYFGKKASGNSNKESLSSVCGLRLLHRRQKRIIGGKNSLRGGWPWQVSLRLKSYHGDGRLLCGATLLSSCWVLTAAHCFKRYGNSTRNYAVRVGDYHTLVPEEFEEEIGVQQIVIHREYRPDSSDYDIALVRLQGPEEQCARFSSHVLPACLPLWRERPQKTASNCYITGWGDTGRAYSRTLQQAAIPLLPKRFCEERYKGRFTGRMLCAGNLHEHKRVDSCQGDSGGPLMCERPGESWVVYGVTSWGYGCGVKDSPGVYTKVSAFVPWIKSVTKL</sequence>
<organism>
    <name type="scientific">Gorilla gorilla gorilla</name>
    <name type="common">Western lowland gorilla</name>
    <dbReference type="NCBI Taxonomy" id="9595"/>
    <lineage>
        <taxon>Eukaryota</taxon>
        <taxon>Metazoa</taxon>
        <taxon>Chordata</taxon>
        <taxon>Craniata</taxon>
        <taxon>Vertebrata</taxon>
        <taxon>Euteleostomi</taxon>
        <taxon>Mammalia</taxon>
        <taxon>Eutheria</taxon>
        <taxon>Euarchontoglires</taxon>
        <taxon>Primates</taxon>
        <taxon>Haplorrhini</taxon>
        <taxon>Catarrhini</taxon>
        <taxon>Hominidae</taxon>
        <taxon>Gorilla</taxon>
    </lineage>
</organism>
<gene>
    <name type="primary">PRSS12</name>
</gene>
<proteinExistence type="inferred from homology"/>
<reference key="1">
    <citation type="journal article" date="2005" name="Cytogenet. Genome Res.">
        <title>Genetic evidence of a strong functional constraint of neurotrypsin during primate evolution.</title>
        <authorList>
            <person name="Xu H.L."/>
            <person name="Su B."/>
        </authorList>
    </citation>
    <scope>NUCLEOTIDE SEQUENCE [GENOMIC DNA]</scope>
</reference>
<name>NETR_GORGO</name>
<dbReference type="EC" id="3.4.21.-"/>
<dbReference type="EMBL" id="AY862977">
    <property type="protein sequence ID" value="AAW57539.1"/>
    <property type="molecule type" value="Genomic_DNA"/>
</dbReference>
<dbReference type="EMBL" id="AY862893">
    <property type="protein sequence ID" value="AAW57539.1"/>
    <property type="status" value="JOINED"/>
    <property type="molecule type" value="Genomic_DNA"/>
</dbReference>
<dbReference type="EMBL" id="AY862900">
    <property type="protein sequence ID" value="AAW57539.1"/>
    <property type="status" value="JOINED"/>
    <property type="molecule type" value="Genomic_DNA"/>
</dbReference>
<dbReference type="EMBL" id="AY862907">
    <property type="protein sequence ID" value="AAW57539.1"/>
    <property type="status" value="JOINED"/>
    <property type="molecule type" value="Genomic_DNA"/>
</dbReference>
<dbReference type="EMBL" id="AY862914">
    <property type="protein sequence ID" value="AAW57539.1"/>
    <property type="status" value="JOINED"/>
    <property type="molecule type" value="Genomic_DNA"/>
</dbReference>
<dbReference type="EMBL" id="AY862921">
    <property type="protein sequence ID" value="AAW57539.1"/>
    <property type="status" value="JOINED"/>
    <property type="molecule type" value="Genomic_DNA"/>
</dbReference>
<dbReference type="EMBL" id="AY862928">
    <property type="protein sequence ID" value="AAW57539.1"/>
    <property type="status" value="JOINED"/>
    <property type="molecule type" value="Genomic_DNA"/>
</dbReference>
<dbReference type="EMBL" id="AY862935">
    <property type="protein sequence ID" value="AAW57539.1"/>
    <property type="status" value="JOINED"/>
    <property type="molecule type" value="Genomic_DNA"/>
</dbReference>
<dbReference type="EMBL" id="AY862942">
    <property type="protein sequence ID" value="AAW57539.1"/>
    <property type="status" value="JOINED"/>
    <property type="molecule type" value="Genomic_DNA"/>
</dbReference>
<dbReference type="EMBL" id="AY862949">
    <property type="protein sequence ID" value="AAW57539.1"/>
    <property type="status" value="JOINED"/>
    <property type="molecule type" value="Genomic_DNA"/>
</dbReference>
<dbReference type="EMBL" id="AY862956">
    <property type="protein sequence ID" value="AAW57539.1"/>
    <property type="status" value="JOINED"/>
    <property type="molecule type" value="Genomic_DNA"/>
</dbReference>
<dbReference type="EMBL" id="AY862963">
    <property type="protein sequence ID" value="AAW57539.1"/>
    <property type="status" value="JOINED"/>
    <property type="molecule type" value="Genomic_DNA"/>
</dbReference>
<dbReference type="EMBL" id="AY862970">
    <property type="protein sequence ID" value="AAW57539.1"/>
    <property type="status" value="JOINED"/>
    <property type="molecule type" value="Genomic_DNA"/>
</dbReference>
<dbReference type="RefSeq" id="XP_004040363.3">
    <property type="nucleotide sequence ID" value="XM_004040315.5"/>
</dbReference>
<dbReference type="SMR" id="Q5G270"/>
<dbReference type="FunCoup" id="Q5G270">
    <property type="interactions" value="48"/>
</dbReference>
<dbReference type="STRING" id="9593.ENSGGOP00000002772"/>
<dbReference type="MEROPS" id="S01.237"/>
<dbReference type="GlyCosmos" id="Q5G270">
    <property type="glycosylation" value="2 sites, No reported glycans"/>
</dbReference>
<dbReference type="GeneID" id="101143452"/>
<dbReference type="eggNOG" id="KOG3627">
    <property type="taxonomic scope" value="Eukaryota"/>
</dbReference>
<dbReference type="InParanoid" id="Q5G270"/>
<dbReference type="Proteomes" id="UP000001519">
    <property type="component" value="Unplaced"/>
</dbReference>
<dbReference type="GO" id="GO:0030424">
    <property type="term" value="C:axon"/>
    <property type="evidence" value="ECO:0000250"/>
    <property type="project" value="UniProtKB"/>
</dbReference>
<dbReference type="GO" id="GO:0030425">
    <property type="term" value="C:dendrite"/>
    <property type="evidence" value="ECO:0000318"/>
    <property type="project" value="GO_Central"/>
</dbReference>
<dbReference type="GO" id="GO:0005886">
    <property type="term" value="C:plasma membrane"/>
    <property type="evidence" value="ECO:0000250"/>
    <property type="project" value="UniProtKB"/>
</dbReference>
<dbReference type="GO" id="GO:0043083">
    <property type="term" value="C:synaptic cleft"/>
    <property type="evidence" value="ECO:0000318"/>
    <property type="project" value="GO_Central"/>
</dbReference>
<dbReference type="GO" id="GO:0043195">
    <property type="term" value="C:terminal bouton"/>
    <property type="evidence" value="ECO:0000318"/>
    <property type="project" value="GO_Central"/>
</dbReference>
<dbReference type="GO" id="GO:0004252">
    <property type="term" value="F:serine-type endopeptidase activity"/>
    <property type="evidence" value="ECO:0007669"/>
    <property type="project" value="InterPro"/>
</dbReference>
<dbReference type="GO" id="GO:0006887">
    <property type="term" value="P:exocytosis"/>
    <property type="evidence" value="ECO:0000250"/>
    <property type="project" value="UniProtKB"/>
</dbReference>
<dbReference type="GO" id="GO:0006508">
    <property type="term" value="P:proteolysis"/>
    <property type="evidence" value="ECO:0007669"/>
    <property type="project" value="UniProtKB-KW"/>
</dbReference>
<dbReference type="CDD" id="cd00190">
    <property type="entry name" value="Tryp_SPc"/>
    <property type="match status" value="1"/>
</dbReference>
<dbReference type="FunFam" id="2.40.10.10:FF:000053">
    <property type="entry name" value="Neurotrypsin"/>
    <property type="match status" value="1"/>
</dbReference>
<dbReference type="FunFam" id="2.40.20.10:FF:000010">
    <property type="entry name" value="Neurotrypsin"/>
    <property type="match status" value="1"/>
</dbReference>
<dbReference type="FunFam" id="3.10.250.10:FF:000019">
    <property type="entry name" value="Neurotrypsin"/>
    <property type="match status" value="1"/>
</dbReference>
<dbReference type="FunFam" id="3.10.250.10:FF:000005">
    <property type="entry name" value="Neurotrypsin isoform A"/>
    <property type="match status" value="2"/>
</dbReference>
<dbReference type="FunFam" id="3.10.250.10:FF:000006">
    <property type="entry name" value="neurotrypsin isoform X2"/>
    <property type="match status" value="1"/>
</dbReference>
<dbReference type="Gene3D" id="2.40.20.10">
    <property type="entry name" value="Plasminogen Kringle 4"/>
    <property type="match status" value="1"/>
</dbReference>
<dbReference type="Gene3D" id="3.10.250.10">
    <property type="entry name" value="SRCR-like domain"/>
    <property type="match status" value="4"/>
</dbReference>
<dbReference type="Gene3D" id="2.40.10.10">
    <property type="entry name" value="Trypsin-like serine proteases"/>
    <property type="match status" value="1"/>
</dbReference>
<dbReference type="InterPro" id="IPR000001">
    <property type="entry name" value="Kringle"/>
</dbReference>
<dbReference type="InterPro" id="IPR013806">
    <property type="entry name" value="Kringle-like"/>
</dbReference>
<dbReference type="InterPro" id="IPR018056">
    <property type="entry name" value="Kringle_CS"/>
</dbReference>
<dbReference type="InterPro" id="IPR038178">
    <property type="entry name" value="Kringle_sf"/>
</dbReference>
<dbReference type="InterPro" id="IPR009003">
    <property type="entry name" value="Peptidase_S1_PA"/>
</dbReference>
<dbReference type="InterPro" id="IPR043504">
    <property type="entry name" value="Peptidase_S1_PA_chymotrypsin"/>
</dbReference>
<dbReference type="InterPro" id="IPR001314">
    <property type="entry name" value="Peptidase_S1A"/>
</dbReference>
<dbReference type="InterPro" id="IPR001190">
    <property type="entry name" value="SRCR"/>
</dbReference>
<dbReference type="InterPro" id="IPR036772">
    <property type="entry name" value="SRCR-like_dom_sf"/>
</dbReference>
<dbReference type="InterPro" id="IPR001254">
    <property type="entry name" value="Trypsin_dom"/>
</dbReference>
<dbReference type="InterPro" id="IPR018114">
    <property type="entry name" value="TRYPSIN_HIS"/>
</dbReference>
<dbReference type="InterPro" id="IPR033116">
    <property type="entry name" value="TRYPSIN_SER"/>
</dbReference>
<dbReference type="PANTHER" id="PTHR19331:SF465">
    <property type="entry name" value="EGG PEPTIDE SPERACT RECEPTOR"/>
    <property type="match status" value="1"/>
</dbReference>
<dbReference type="PANTHER" id="PTHR19331">
    <property type="entry name" value="SCAVENGER RECEPTOR DOMAIN-CONTAINING"/>
    <property type="match status" value="1"/>
</dbReference>
<dbReference type="Pfam" id="PF00051">
    <property type="entry name" value="Kringle"/>
    <property type="match status" value="1"/>
</dbReference>
<dbReference type="Pfam" id="PF00530">
    <property type="entry name" value="SRCR"/>
    <property type="match status" value="4"/>
</dbReference>
<dbReference type="Pfam" id="PF00089">
    <property type="entry name" value="Trypsin"/>
    <property type="match status" value="1"/>
</dbReference>
<dbReference type="PRINTS" id="PR00722">
    <property type="entry name" value="CHYMOTRYPSIN"/>
</dbReference>
<dbReference type="PRINTS" id="PR00258">
    <property type="entry name" value="SPERACTRCPTR"/>
</dbReference>
<dbReference type="SMART" id="SM00130">
    <property type="entry name" value="KR"/>
    <property type="match status" value="1"/>
</dbReference>
<dbReference type="SMART" id="SM00202">
    <property type="entry name" value="SR"/>
    <property type="match status" value="4"/>
</dbReference>
<dbReference type="SMART" id="SM00020">
    <property type="entry name" value="Tryp_SPc"/>
    <property type="match status" value="1"/>
</dbReference>
<dbReference type="SUPFAM" id="SSF57440">
    <property type="entry name" value="Kringle-like"/>
    <property type="match status" value="1"/>
</dbReference>
<dbReference type="SUPFAM" id="SSF56487">
    <property type="entry name" value="SRCR-like"/>
    <property type="match status" value="4"/>
</dbReference>
<dbReference type="SUPFAM" id="SSF50494">
    <property type="entry name" value="Trypsin-like serine proteases"/>
    <property type="match status" value="1"/>
</dbReference>
<dbReference type="PROSITE" id="PS00021">
    <property type="entry name" value="KRINGLE_1"/>
    <property type="match status" value="1"/>
</dbReference>
<dbReference type="PROSITE" id="PS50070">
    <property type="entry name" value="KRINGLE_2"/>
    <property type="match status" value="1"/>
</dbReference>
<dbReference type="PROSITE" id="PS00420">
    <property type="entry name" value="SRCR_1"/>
    <property type="match status" value="3"/>
</dbReference>
<dbReference type="PROSITE" id="PS50287">
    <property type="entry name" value="SRCR_2"/>
    <property type="match status" value="4"/>
</dbReference>
<dbReference type="PROSITE" id="PS50240">
    <property type="entry name" value="TRYPSIN_DOM"/>
    <property type="match status" value="1"/>
</dbReference>
<dbReference type="PROSITE" id="PS00134">
    <property type="entry name" value="TRYPSIN_HIS"/>
    <property type="match status" value="1"/>
</dbReference>
<dbReference type="PROSITE" id="PS00135">
    <property type="entry name" value="TRYPSIN_SER"/>
    <property type="match status" value="1"/>
</dbReference>
<keyword id="KW-1015">Disulfide bond</keyword>
<keyword id="KW-0325">Glycoprotein</keyword>
<keyword id="KW-0378">Hydrolase</keyword>
<keyword id="KW-0420">Kringle</keyword>
<keyword id="KW-0645">Protease</keyword>
<keyword id="KW-1185">Reference proteome</keyword>
<keyword id="KW-0677">Repeat</keyword>
<keyword id="KW-0964">Secreted</keyword>
<keyword id="KW-0720">Serine protease</keyword>
<keyword id="KW-0732">Signal</keyword>
<accession>Q5G270</accession>
<protein>
    <recommendedName>
        <fullName>Neurotrypsin</fullName>
        <ecNumber>3.4.21.-</ecNumber>
    </recommendedName>
    <alternativeName>
        <fullName>Serine protease 12</fullName>
    </alternativeName>
</protein>